<protein>
    <recommendedName>
        <fullName>Delta-aminolevulinic acid dehydratase</fullName>
        <shortName>ALAD</shortName>
        <shortName>ALADH</shortName>
        <ecNumber>4.2.1.24</ecNumber>
    </recommendedName>
    <alternativeName>
        <fullName>Porphobilinogen synthase</fullName>
    </alternativeName>
</protein>
<evidence type="ECO:0000250" key="1"/>
<evidence type="ECO:0000305" key="2"/>
<accession>Q6G8Q7</accession>
<dbReference type="EC" id="4.2.1.24"/>
<dbReference type="EMBL" id="BX571857">
    <property type="protein sequence ID" value="CAG43399.1"/>
    <property type="molecule type" value="Genomic_DNA"/>
</dbReference>
<dbReference type="RefSeq" id="WP_000667126.1">
    <property type="nucleotide sequence ID" value="NC_002953.3"/>
</dbReference>
<dbReference type="SMR" id="Q6G8Q7"/>
<dbReference type="KEGG" id="sas:SAS1597"/>
<dbReference type="HOGENOM" id="CLU_035731_0_0_9"/>
<dbReference type="UniPathway" id="UPA00251">
    <property type="reaction ID" value="UER00318"/>
</dbReference>
<dbReference type="GO" id="GO:0005829">
    <property type="term" value="C:cytosol"/>
    <property type="evidence" value="ECO:0007669"/>
    <property type="project" value="TreeGrafter"/>
</dbReference>
<dbReference type="GO" id="GO:0004655">
    <property type="term" value="F:porphobilinogen synthase activity"/>
    <property type="evidence" value="ECO:0007669"/>
    <property type="project" value="UniProtKB-EC"/>
</dbReference>
<dbReference type="GO" id="GO:0008270">
    <property type="term" value="F:zinc ion binding"/>
    <property type="evidence" value="ECO:0007669"/>
    <property type="project" value="TreeGrafter"/>
</dbReference>
<dbReference type="GO" id="GO:0006782">
    <property type="term" value="P:protoporphyrinogen IX biosynthetic process"/>
    <property type="evidence" value="ECO:0007669"/>
    <property type="project" value="UniProtKB-UniPathway"/>
</dbReference>
<dbReference type="CDD" id="cd00384">
    <property type="entry name" value="ALAD_PBGS"/>
    <property type="match status" value="1"/>
</dbReference>
<dbReference type="FunFam" id="3.20.20.70:FF:000019">
    <property type="entry name" value="Delta-aminolevulinic acid dehydratase"/>
    <property type="match status" value="1"/>
</dbReference>
<dbReference type="Gene3D" id="3.20.20.70">
    <property type="entry name" value="Aldolase class I"/>
    <property type="match status" value="1"/>
</dbReference>
<dbReference type="InterPro" id="IPR001731">
    <property type="entry name" value="ALAD"/>
</dbReference>
<dbReference type="InterPro" id="IPR030656">
    <property type="entry name" value="ALAD_AS"/>
</dbReference>
<dbReference type="InterPro" id="IPR013785">
    <property type="entry name" value="Aldolase_TIM"/>
</dbReference>
<dbReference type="NCBIfam" id="NF006762">
    <property type="entry name" value="PRK09283.1"/>
    <property type="match status" value="1"/>
</dbReference>
<dbReference type="PANTHER" id="PTHR11458">
    <property type="entry name" value="DELTA-AMINOLEVULINIC ACID DEHYDRATASE"/>
    <property type="match status" value="1"/>
</dbReference>
<dbReference type="PANTHER" id="PTHR11458:SF0">
    <property type="entry name" value="DELTA-AMINOLEVULINIC ACID DEHYDRATASE"/>
    <property type="match status" value="1"/>
</dbReference>
<dbReference type="Pfam" id="PF00490">
    <property type="entry name" value="ALAD"/>
    <property type="match status" value="1"/>
</dbReference>
<dbReference type="PIRSF" id="PIRSF001415">
    <property type="entry name" value="Porphbilin_synth"/>
    <property type="match status" value="1"/>
</dbReference>
<dbReference type="PRINTS" id="PR00144">
    <property type="entry name" value="DALDHYDRTASE"/>
</dbReference>
<dbReference type="SMART" id="SM01004">
    <property type="entry name" value="ALAD"/>
    <property type="match status" value="1"/>
</dbReference>
<dbReference type="SUPFAM" id="SSF51569">
    <property type="entry name" value="Aldolase"/>
    <property type="match status" value="1"/>
</dbReference>
<dbReference type="PROSITE" id="PS00169">
    <property type="entry name" value="D_ALA_DEHYDRATASE"/>
    <property type="match status" value="1"/>
</dbReference>
<feature type="chain" id="PRO_0000140514" description="Delta-aminolevulinic acid dehydratase">
    <location>
        <begin position="1"/>
        <end position="324"/>
    </location>
</feature>
<feature type="active site" description="Schiff-base intermediate with substrate" evidence="1">
    <location>
        <position position="195"/>
    </location>
</feature>
<feature type="active site" description="Schiff-base intermediate with substrate" evidence="1">
    <location>
        <position position="248"/>
    </location>
</feature>
<feature type="binding site" evidence="1">
    <location>
        <position position="118"/>
    </location>
    <ligand>
        <name>Zn(2+)</name>
        <dbReference type="ChEBI" id="CHEBI:29105"/>
        <note>catalytic</note>
    </ligand>
</feature>
<feature type="binding site" evidence="1">
    <location>
        <position position="120"/>
    </location>
    <ligand>
        <name>Zn(2+)</name>
        <dbReference type="ChEBI" id="CHEBI:29105"/>
        <note>catalytic</note>
    </ligand>
</feature>
<feature type="binding site" evidence="1">
    <location>
        <position position="128"/>
    </location>
    <ligand>
        <name>Zn(2+)</name>
        <dbReference type="ChEBI" id="CHEBI:29105"/>
        <note>catalytic</note>
    </ligand>
</feature>
<feature type="binding site" evidence="1">
    <location>
        <position position="205"/>
    </location>
    <ligand>
        <name>5-aminolevulinate</name>
        <dbReference type="ChEBI" id="CHEBI:356416"/>
        <label>1</label>
    </ligand>
</feature>
<feature type="binding site" evidence="1">
    <location>
        <position position="217"/>
    </location>
    <ligand>
        <name>5-aminolevulinate</name>
        <dbReference type="ChEBI" id="CHEBI:356416"/>
        <label>1</label>
    </ligand>
</feature>
<feature type="binding site" evidence="1">
    <location>
        <position position="233"/>
    </location>
    <ligand>
        <name>Mg(2+)</name>
        <dbReference type="ChEBI" id="CHEBI:18420"/>
    </ligand>
</feature>
<feature type="binding site" evidence="1">
    <location>
        <position position="274"/>
    </location>
    <ligand>
        <name>5-aminolevulinate</name>
        <dbReference type="ChEBI" id="CHEBI:356416"/>
        <label>2</label>
    </ligand>
</feature>
<feature type="binding site" evidence="1">
    <location>
        <position position="313"/>
    </location>
    <ligand>
        <name>5-aminolevulinate</name>
        <dbReference type="ChEBI" id="CHEBI:356416"/>
        <label>2</label>
    </ligand>
</feature>
<gene>
    <name type="primary">hemB</name>
    <name type="ordered locus">SAS1597</name>
</gene>
<proteinExistence type="inferred from homology"/>
<keyword id="KW-0350">Heme biosynthesis</keyword>
<keyword id="KW-0456">Lyase</keyword>
<keyword id="KW-0460">Magnesium</keyword>
<keyword id="KW-0479">Metal-binding</keyword>
<keyword id="KW-0627">Porphyrin biosynthesis</keyword>
<keyword id="KW-0862">Zinc</keyword>
<organism>
    <name type="scientific">Staphylococcus aureus (strain MSSA476)</name>
    <dbReference type="NCBI Taxonomy" id="282459"/>
    <lineage>
        <taxon>Bacteria</taxon>
        <taxon>Bacillati</taxon>
        <taxon>Bacillota</taxon>
        <taxon>Bacilli</taxon>
        <taxon>Bacillales</taxon>
        <taxon>Staphylococcaceae</taxon>
        <taxon>Staphylococcus</taxon>
    </lineage>
</organism>
<name>HEM2_STAAS</name>
<reference key="1">
    <citation type="journal article" date="2004" name="Proc. Natl. Acad. Sci. U.S.A.">
        <title>Complete genomes of two clinical Staphylococcus aureus strains: evidence for the rapid evolution of virulence and drug resistance.</title>
        <authorList>
            <person name="Holden M.T.G."/>
            <person name="Feil E.J."/>
            <person name="Lindsay J.A."/>
            <person name="Peacock S.J."/>
            <person name="Day N.P.J."/>
            <person name="Enright M.C."/>
            <person name="Foster T.J."/>
            <person name="Moore C.E."/>
            <person name="Hurst L."/>
            <person name="Atkin R."/>
            <person name="Barron A."/>
            <person name="Bason N."/>
            <person name="Bentley S.D."/>
            <person name="Chillingworth C."/>
            <person name="Chillingworth T."/>
            <person name="Churcher C."/>
            <person name="Clark L."/>
            <person name="Corton C."/>
            <person name="Cronin A."/>
            <person name="Doggett J."/>
            <person name="Dowd L."/>
            <person name="Feltwell T."/>
            <person name="Hance Z."/>
            <person name="Harris B."/>
            <person name="Hauser H."/>
            <person name="Holroyd S."/>
            <person name="Jagels K."/>
            <person name="James K.D."/>
            <person name="Lennard N."/>
            <person name="Line A."/>
            <person name="Mayes R."/>
            <person name="Moule S."/>
            <person name="Mungall K."/>
            <person name="Ormond D."/>
            <person name="Quail M.A."/>
            <person name="Rabbinowitsch E."/>
            <person name="Rutherford K.M."/>
            <person name="Sanders M."/>
            <person name="Sharp S."/>
            <person name="Simmonds M."/>
            <person name="Stevens K."/>
            <person name="Whitehead S."/>
            <person name="Barrell B.G."/>
            <person name="Spratt B.G."/>
            <person name="Parkhill J."/>
        </authorList>
    </citation>
    <scope>NUCLEOTIDE SEQUENCE [LARGE SCALE GENOMIC DNA]</scope>
    <source>
        <strain>MSSA476</strain>
    </source>
</reference>
<sequence length="324" mass="36583">MKFDRHRRLRSSATMRDMVRENHVRKEDLIYPIFVVEKDDVKKEIKSLPGVYQISLNLLESELKEAYDLGIRAIMFFGVPNSKDDIGTGAYIHDGVIQQATRIAKKMYDDLLIVADTCLCEYTDHGHCGVIDDHTHDVDNDKSLPLLVKTAISQVEAGADIIAPSNMMDGFVAEIRRGLDEAGYYNIPIMSYGVKYASSFFGPFRDAADSAPSFGDRKTYQMDPANRLEALRELESDLKEGCDMMIVKPALSYLDIVRDVKNHTNVPVVAYNVSGEYSMTKAAAQNGWIDEERVVMEQMVSMKRAGADMIITYFAKDICRYLDK</sequence>
<comment type="function">
    <text evidence="1">Catalyzes an early step in the biosynthesis of tetrapyrroles. Binds two molecules of 5-aminolevulinate per subunit, each at a distinct site, and catalyzes their condensation to form porphobilinogen (By similarity).</text>
</comment>
<comment type="catalytic activity">
    <reaction>
        <text>2 5-aminolevulinate = porphobilinogen + 2 H2O + H(+)</text>
        <dbReference type="Rhea" id="RHEA:24064"/>
        <dbReference type="ChEBI" id="CHEBI:15377"/>
        <dbReference type="ChEBI" id="CHEBI:15378"/>
        <dbReference type="ChEBI" id="CHEBI:58126"/>
        <dbReference type="ChEBI" id="CHEBI:356416"/>
        <dbReference type="EC" id="4.2.1.24"/>
    </reaction>
</comment>
<comment type="cofactor">
    <cofactor evidence="1">
        <name>Zn(2+)</name>
        <dbReference type="ChEBI" id="CHEBI:29105"/>
    </cofactor>
    <text evidence="1">Binds 1 zinc ion per monomer.</text>
</comment>
<comment type="pathway">
    <text>Porphyrin-containing compound metabolism; protoporphyrin-IX biosynthesis; coproporphyrinogen-III from 5-aminolevulinate: step 1/4.</text>
</comment>
<comment type="subunit">
    <text evidence="1">Homooctamer.</text>
</comment>
<comment type="similarity">
    <text evidence="2">Belongs to the ALAD family.</text>
</comment>